<reference key="1">
    <citation type="journal article" date="2006" name="PLoS Biol.">
        <title>The genome of deep-sea vent chemolithoautotroph Thiomicrospira crunogena XCL-2.</title>
        <authorList>
            <person name="Scott K.M."/>
            <person name="Sievert S.M."/>
            <person name="Abril F.N."/>
            <person name="Ball L.A."/>
            <person name="Barrett C.J."/>
            <person name="Blake R.A."/>
            <person name="Boller A.J."/>
            <person name="Chain P.S.G."/>
            <person name="Clark J.A."/>
            <person name="Davis C.R."/>
            <person name="Detter C."/>
            <person name="Do K.F."/>
            <person name="Dobrinski K.P."/>
            <person name="Faza B.I."/>
            <person name="Fitzpatrick K.A."/>
            <person name="Freyermuth S.K."/>
            <person name="Harmer T.L."/>
            <person name="Hauser L.J."/>
            <person name="Huegler M."/>
            <person name="Kerfeld C.A."/>
            <person name="Klotz M.G."/>
            <person name="Kong W.W."/>
            <person name="Land M."/>
            <person name="Lapidus A."/>
            <person name="Larimer F.W."/>
            <person name="Longo D.L."/>
            <person name="Lucas S."/>
            <person name="Malfatti S.A."/>
            <person name="Massey S.E."/>
            <person name="Martin D.D."/>
            <person name="McCuddin Z."/>
            <person name="Meyer F."/>
            <person name="Moore J.L."/>
            <person name="Ocampo L.H. Jr."/>
            <person name="Paul J.H."/>
            <person name="Paulsen I.T."/>
            <person name="Reep D.K."/>
            <person name="Ren Q."/>
            <person name="Ross R.L."/>
            <person name="Sato P.Y."/>
            <person name="Thomas P."/>
            <person name="Tinkham L.E."/>
            <person name="Zeruth G.T."/>
        </authorList>
    </citation>
    <scope>NUCLEOTIDE SEQUENCE [LARGE SCALE GENOMIC DNA]</scope>
    <source>
        <strain>DSM 25203 / XCL-2</strain>
    </source>
</reference>
<organism>
    <name type="scientific">Hydrogenovibrio crunogenus (strain DSM 25203 / XCL-2)</name>
    <name type="common">Thiomicrospira crunogena</name>
    <dbReference type="NCBI Taxonomy" id="317025"/>
    <lineage>
        <taxon>Bacteria</taxon>
        <taxon>Pseudomonadati</taxon>
        <taxon>Pseudomonadota</taxon>
        <taxon>Gammaproteobacteria</taxon>
        <taxon>Thiotrichales</taxon>
        <taxon>Piscirickettsiaceae</taxon>
        <taxon>Hydrogenovibrio</taxon>
    </lineage>
</organism>
<gene>
    <name evidence="1" type="primary">leuB</name>
    <name type="ordered locus">Tcr_0797</name>
</gene>
<dbReference type="EC" id="1.1.1.85" evidence="1"/>
<dbReference type="EMBL" id="CP000109">
    <property type="protein sequence ID" value="ABB41393.1"/>
    <property type="molecule type" value="Genomic_DNA"/>
</dbReference>
<dbReference type="SMR" id="Q31HI0"/>
<dbReference type="STRING" id="317025.Tcr_0797"/>
<dbReference type="KEGG" id="tcx:Tcr_0797"/>
<dbReference type="eggNOG" id="COG0473">
    <property type="taxonomic scope" value="Bacteria"/>
</dbReference>
<dbReference type="HOGENOM" id="CLU_031953_0_3_6"/>
<dbReference type="OrthoDB" id="9767905at2"/>
<dbReference type="UniPathway" id="UPA00048">
    <property type="reaction ID" value="UER00072"/>
</dbReference>
<dbReference type="GO" id="GO:0005829">
    <property type="term" value="C:cytosol"/>
    <property type="evidence" value="ECO:0007669"/>
    <property type="project" value="TreeGrafter"/>
</dbReference>
<dbReference type="GO" id="GO:0003862">
    <property type="term" value="F:3-isopropylmalate dehydrogenase activity"/>
    <property type="evidence" value="ECO:0007669"/>
    <property type="project" value="UniProtKB-UniRule"/>
</dbReference>
<dbReference type="GO" id="GO:0000287">
    <property type="term" value="F:magnesium ion binding"/>
    <property type="evidence" value="ECO:0007669"/>
    <property type="project" value="InterPro"/>
</dbReference>
<dbReference type="GO" id="GO:0051287">
    <property type="term" value="F:NAD binding"/>
    <property type="evidence" value="ECO:0007669"/>
    <property type="project" value="InterPro"/>
</dbReference>
<dbReference type="GO" id="GO:0009098">
    <property type="term" value="P:L-leucine biosynthetic process"/>
    <property type="evidence" value="ECO:0007669"/>
    <property type="project" value="UniProtKB-UniRule"/>
</dbReference>
<dbReference type="FunFam" id="3.40.718.10:FF:000004">
    <property type="entry name" value="3-isopropylmalate dehydrogenase"/>
    <property type="match status" value="1"/>
</dbReference>
<dbReference type="Gene3D" id="3.40.718.10">
    <property type="entry name" value="Isopropylmalate Dehydrogenase"/>
    <property type="match status" value="1"/>
</dbReference>
<dbReference type="HAMAP" id="MF_01033">
    <property type="entry name" value="LeuB_type1"/>
    <property type="match status" value="1"/>
</dbReference>
<dbReference type="InterPro" id="IPR019818">
    <property type="entry name" value="IsoCit/isopropylmalate_DH_CS"/>
</dbReference>
<dbReference type="InterPro" id="IPR024084">
    <property type="entry name" value="IsoPropMal-DH-like_dom"/>
</dbReference>
<dbReference type="InterPro" id="IPR004429">
    <property type="entry name" value="Isopropylmalate_DH"/>
</dbReference>
<dbReference type="NCBIfam" id="TIGR00169">
    <property type="entry name" value="leuB"/>
    <property type="match status" value="1"/>
</dbReference>
<dbReference type="PANTHER" id="PTHR42979">
    <property type="entry name" value="3-ISOPROPYLMALATE DEHYDROGENASE"/>
    <property type="match status" value="1"/>
</dbReference>
<dbReference type="PANTHER" id="PTHR42979:SF1">
    <property type="entry name" value="3-ISOPROPYLMALATE DEHYDROGENASE"/>
    <property type="match status" value="1"/>
</dbReference>
<dbReference type="Pfam" id="PF00180">
    <property type="entry name" value="Iso_dh"/>
    <property type="match status" value="1"/>
</dbReference>
<dbReference type="SMART" id="SM01329">
    <property type="entry name" value="Iso_dh"/>
    <property type="match status" value="1"/>
</dbReference>
<dbReference type="SUPFAM" id="SSF53659">
    <property type="entry name" value="Isocitrate/Isopropylmalate dehydrogenase-like"/>
    <property type="match status" value="1"/>
</dbReference>
<dbReference type="PROSITE" id="PS00470">
    <property type="entry name" value="IDH_IMDH"/>
    <property type="match status" value="1"/>
</dbReference>
<feature type="chain" id="PRO_0000250147" description="3-isopropylmalate dehydrogenase">
    <location>
        <begin position="1"/>
        <end position="357"/>
    </location>
</feature>
<feature type="binding site" evidence="1">
    <location>
        <begin position="76"/>
        <end position="89"/>
    </location>
    <ligand>
        <name>NAD(+)</name>
        <dbReference type="ChEBI" id="CHEBI:57540"/>
    </ligand>
</feature>
<feature type="binding site" evidence="1">
    <location>
        <position position="96"/>
    </location>
    <ligand>
        <name>substrate</name>
    </ligand>
</feature>
<feature type="binding site" evidence="1">
    <location>
        <position position="106"/>
    </location>
    <ligand>
        <name>substrate</name>
    </ligand>
</feature>
<feature type="binding site" evidence="1">
    <location>
        <position position="134"/>
    </location>
    <ligand>
        <name>substrate</name>
    </ligand>
</feature>
<feature type="binding site" evidence="1">
    <location>
        <position position="224"/>
    </location>
    <ligand>
        <name>Mg(2+)</name>
        <dbReference type="ChEBI" id="CHEBI:18420"/>
    </ligand>
</feature>
<feature type="binding site" evidence="1">
    <location>
        <position position="224"/>
    </location>
    <ligand>
        <name>substrate</name>
    </ligand>
</feature>
<feature type="binding site" evidence="1">
    <location>
        <position position="248"/>
    </location>
    <ligand>
        <name>Mg(2+)</name>
        <dbReference type="ChEBI" id="CHEBI:18420"/>
    </ligand>
</feature>
<feature type="binding site" evidence="1">
    <location>
        <position position="252"/>
    </location>
    <ligand>
        <name>Mg(2+)</name>
        <dbReference type="ChEBI" id="CHEBI:18420"/>
    </ligand>
</feature>
<feature type="binding site" evidence="1">
    <location>
        <begin position="282"/>
        <end position="294"/>
    </location>
    <ligand>
        <name>NAD(+)</name>
        <dbReference type="ChEBI" id="CHEBI:57540"/>
    </ligand>
</feature>
<feature type="site" description="Important for catalysis" evidence="1">
    <location>
        <position position="141"/>
    </location>
</feature>
<feature type="site" description="Important for catalysis" evidence="1">
    <location>
        <position position="192"/>
    </location>
</feature>
<accession>Q31HI0</accession>
<evidence type="ECO:0000255" key="1">
    <source>
        <dbReference type="HAMAP-Rule" id="MF_01033"/>
    </source>
</evidence>
<comment type="function">
    <text evidence="1">Catalyzes the oxidation of 3-carboxy-2-hydroxy-4-methylpentanoate (3-isopropylmalate) to 3-carboxy-4-methyl-2-oxopentanoate. The product decarboxylates to 4-methyl-2 oxopentanoate.</text>
</comment>
<comment type="catalytic activity">
    <reaction evidence="1">
        <text>(2R,3S)-3-isopropylmalate + NAD(+) = 4-methyl-2-oxopentanoate + CO2 + NADH</text>
        <dbReference type="Rhea" id="RHEA:32271"/>
        <dbReference type="ChEBI" id="CHEBI:16526"/>
        <dbReference type="ChEBI" id="CHEBI:17865"/>
        <dbReference type="ChEBI" id="CHEBI:35121"/>
        <dbReference type="ChEBI" id="CHEBI:57540"/>
        <dbReference type="ChEBI" id="CHEBI:57945"/>
        <dbReference type="EC" id="1.1.1.85"/>
    </reaction>
</comment>
<comment type="cofactor">
    <cofactor evidence="1">
        <name>Mg(2+)</name>
        <dbReference type="ChEBI" id="CHEBI:18420"/>
    </cofactor>
    <cofactor evidence="1">
        <name>Mn(2+)</name>
        <dbReference type="ChEBI" id="CHEBI:29035"/>
    </cofactor>
    <text evidence="1">Binds 1 Mg(2+) or Mn(2+) ion per subunit.</text>
</comment>
<comment type="pathway">
    <text evidence="1">Amino-acid biosynthesis; L-leucine biosynthesis; L-leucine from 3-methyl-2-oxobutanoate: step 3/4.</text>
</comment>
<comment type="subunit">
    <text evidence="1">Homodimer.</text>
</comment>
<comment type="subcellular location">
    <subcellularLocation>
        <location evidence="1">Cytoplasm</location>
    </subcellularLocation>
</comment>
<comment type="similarity">
    <text evidence="1">Belongs to the isocitrate and isopropylmalate dehydrogenases family. LeuB type 1 subfamily.</text>
</comment>
<name>LEU3_HYDCU</name>
<sequence length="357" mass="38743">MTQEVLILPGDGIGPEITAEAVKVLEALQQKDNLDISMTHDLVGGAAYDQHGVPLAEETLEKAKQSDAILLGAVGGYQWESLDISVRPEKGLLALRSNLELFANLRPAYLFPQLADASTLKPEVVAGLDILIVRELTGGIYFGQPRGIRTLDNGERQGYNTYVYSESEIKRIAHVAFDAAMKRNKKLCSVDKANVLEVTEMWREIVDEVAKEYPEVEVQHMYVDNAAMQLVLNPKQFDVMVTGNMFGDILSDEASMLTGSIGMLASASLDANNKGMYEPSHGSAPDIAGQNIANPLATILSAAMMLRYSLNREDLALKIETAVSKVLDQGLRTGDIWSEGLTKVSTSEMGDAVVAAL</sequence>
<proteinExistence type="inferred from homology"/>
<protein>
    <recommendedName>
        <fullName evidence="1">3-isopropylmalate dehydrogenase</fullName>
        <ecNumber evidence="1">1.1.1.85</ecNumber>
    </recommendedName>
    <alternativeName>
        <fullName evidence="1">3-IPM-DH</fullName>
    </alternativeName>
    <alternativeName>
        <fullName evidence="1">Beta-IPM dehydrogenase</fullName>
        <shortName evidence="1">IMDH</shortName>
    </alternativeName>
</protein>
<keyword id="KW-0028">Amino-acid biosynthesis</keyword>
<keyword id="KW-0100">Branched-chain amino acid biosynthesis</keyword>
<keyword id="KW-0963">Cytoplasm</keyword>
<keyword id="KW-0432">Leucine biosynthesis</keyword>
<keyword id="KW-0460">Magnesium</keyword>
<keyword id="KW-0464">Manganese</keyword>
<keyword id="KW-0479">Metal-binding</keyword>
<keyword id="KW-0520">NAD</keyword>
<keyword id="KW-0560">Oxidoreductase</keyword>